<accession>A2PZE5</accession>
<evidence type="ECO:0000250" key="1"/>
<evidence type="ECO:0000255" key="2"/>
<evidence type="ECO:0000305" key="3"/>
<keyword id="KW-1003">Cell membrane</keyword>
<keyword id="KW-0472">Membrane</keyword>
<keyword id="KW-0812">Transmembrane</keyword>
<keyword id="KW-1133">Transmembrane helix</keyword>
<feature type="chain" id="PRO_0000370722" description="CASP-like protein IN26">
    <location>
        <begin position="1" status="less than"/>
        <end position="195"/>
    </location>
</feature>
<feature type="topological domain" description="Cytoplasmic" evidence="2">
    <location>
        <begin position="1"/>
        <end position="26"/>
    </location>
</feature>
<feature type="transmembrane region" description="Helical" evidence="2">
    <location>
        <begin position="27"/>
        <end position="47"/>
    </location>
</feature>
<feature type="topological domain" description="Extracellular" evidence="2">
    <location>
        <begin position="48"/>
        <end position="75"/>
    </location>
</feature>
<feature type="transmembrane region" description="Helical" evidence="2">
    <location>
        <begin position="76"/>
        <end position="96"/>
    </location>
</feature>
<feature type="topological domain" description="Cytoplasmic" evidence="2">
    <location>
        <begin position="97"/>
        <end position="120"/>
    </location>
</feature>
<feature type="transmembrane region" description="Helical" evidence="2">
    <location>
        <begin position="121"/>
        <end position="143"/>
    </location>
</feature>
<feature type="topological domain" description="Extracellular" evidence="2">
    <location>
        <begin position="144"/>
        <end position="163"/>
    </location>
</feature>
<feature type="transmembrane region" description="Helical" evidence="2">
    <location>
        <begin position="164"/>
        <end position="184"/>
    </location>
</feature>
<feature type="topological domain" description="Cytoplasmic" evidence="2">
    <location>
        <begin position="185"/>
        <end position="195"/>
    </location>
</feature>
<feature type="non-terminal residue">
    <location>
        <position position="1"/>
    </location>
</feature>
<proteinExistence type="evidence at transcript level"/>
<name>CSPL1_IPONI</name>
<dbReference type="EMBL" id="AB267825">
    <property type="protein sequence ID" value="BAF46307.1"/>
    <property type="status" value="ALT_INIT"/>
    <property type="molecule type" value="mRNA"/>
</dbReference>
<dbReference type="SMR" id="A2PZE5"/>
<dbReference type="GO" id="GO:0005886">
    <property type="term" value="C:plasma membrane"/>
    <property type="evidence" value="ECO:0007669"/>
    <property type="project" value="UniProtKB-SubCell"/>
</dbReference>
<dbReference type="InterPro" id="IPR006459">
    <property type="entry name" value="CASP/CASPL"/>
</dbReference>
<dbReference type="InterPro" id="IPR006702">
    <property type="entry name" value="CASP_dom"/>
</dbReference>
<dbReference type="InterPro" id="IPR044173">
    <property type="entry name" value="CASPL"/>
</dbReference>
<dbReference type="NCBIfam" id="TIGR01569">
    <property type="entry name" value="A_tha_TIGR01569"/>
    <property type="match status" value="1"/>
</dbReference>
<dbReference type="PANTHER" id="PTHR36488">
    <property type="entry name" value="CASP-LIKE PROTEIN 1U1"/>
    <property type="match status" value="1"/>
</dbReference>
<dbReference type="PANTHER" id="PTHR36488:SF8">
    <property type="entry name" value="CASP-LIKE PROTEIN 1U1"/>
    <property type="match status" value="1"/>
</dbReference>
<dbReference type="Pfam" id="PF04535">
    <property type="entry name" value="CASP_dom"/>
    <property type="match status" value="1"/>
</dbReference>
<organism>
    <name type="scientific">Ipomoea nil</name>
    <name type="common">Japanese morning glory</name>
    <name type="synonym">Pharbitis nil</name>
    <dbReference type="NCBI Taxonomy" id="35883"/>
    <lineage>
        <taxon>Eukaryota</taxon>
        <taxon>Viridiplantae</taxon>
        <taxon>Streptophyta</taxon>
        <taxon>Embryophyta</taxon>
        <taxon>Tracheophyta</taxon>
        <taxon>Spermatophyta</taxon>
        <taxon>Magnoliopsida</taxon>
        <taxon>eudicotyledons</taxon>
        <taxon>Gunneridae</taxon>
        <taxon>Pentapetalae</taxon>
        <taxon>asterids</taxon>
        <taxon>lamiids</taxon>
        <taxon>Solanales</taxon>
        <taxon>Convolvulaceae</taxon>
        <taxon>Ipomoeeae</taxon>
        <taxon>Ipomoea</taxon>
    </lineage>
</organism>
<reference key="1">
    <citation type="submission" date="2006-08" db="EMBL/GenBank/DDBJ databases">
        <title>Gene expression during anthesis and senescence in morning glory (Ipomoea nil) petals.</title>
        <authorList>
            <person name="Yamada T."/>
            <person name="Ichimura K."/>
            <person name="van Doorn W.G."/>
        </authorList>
    </citation>
    <scope>NUCLEOTIDE SEQUENCE [MRNA]</scope>
    <source>
        <strain>cv. Violet</strain>
        <tissue>Petal</tissue>
    </source>
</reference>
<reference key="2">
    <citation type="journal article" date="2014" name="Plant Physiol.">
        <title>Functional and evolutionary analysis of the CASPARIAN STRIP MEMBRANE DOMAIN PROTEIN family.</title>
        <authorList>
            <person name="Roppolo D."/>
            <person name="Boeckmann B."/>
            <person name="Pfister A."/>
            <person name="Boutet E."/>
            <person name="Rubio M.C."/>
            <person name="Denervaud-Tendon V."/>
            <person name="Vermeer J.E."/>
            <person name="Gheyselinck J."/>
            <person name="Xenarios I."/>
            <person name="Geldner N."/>
        </authorList>
    </citation>
    <scope>GENE FAMILY</scope>
    <scope>NOMENCLATURE</scope>
</reference>
<sequence>VAPTGSVETEKAGPSYKPKEYYKVTEAILRLLLLASLVVAVVVMVTSKETELISVKLDPFPPFMLPLTAKFTQSPAFIYFVAGLSVAGLYTIISTLASFYNLLIKPGFCPALVSHFIILDVVMLGIVGTATGAAGGVAYIGLKGNSHVGWTKVCNKYGKLCTHLGASLAVSFFAFIVLLLLIILSIHSLSKKIPK</sequence>
<protein>
    <recommendedName>
        <fullName>CASP-like protein IN26</fullName>
    </recommendedName>
    <alternativeName>
        <fullName>CASP-like protein 1D1</fullName>
        <shortName>InCASPL1D1</shortName>
    </alternativeName>
</protein>
<comment type="subunit">
    <text evidence="1">Homodimer and heterodimers.</text>
</comment>
<comment type="subcellular location">
    <subcellularLocation>
        <location evidence="1">Cell membrane</location>
        <topology evidence="1">Multi-pass membrane protein</topology>
    </subcellularLocation>
</comment>
<comment type="similarity">
    <text evidence="3">Belongs to the Casparian strip membrane proteins (CASP) family.</text>
</comment>
<comment type="sequence caution" evidence="3">
    <conflict type="erroneous initiation">
        <sequence resource="EMBL-CDS" id="BAF46307"/>
    </conflict>
    <text>Truncated N-terminus.</text>
</comment>
<gene>
    <name type="primary">IN26</name>
</gene>